<organism>
    <name type="scientific">Mus musculus</name>
    <name type="common">Mouse</name>
    <dbReference type="NCBI Taxonomy" id="10090"/>
    <lineage>
        <taxon>Eukaryota</taxon>
        <taxon>Metazoa</taxon>
        <taxon>Chordata</taxon>
        <taxon>Craniata</taxon>
        <taxon>Vertebrata</taxon>
        <taxon>Euteleostomi</taxon>
        <taxon>Mammalia</taxon>
        <taxon>Eutheria</taxon>
        <taxon>Euarchontoglires</taxon>
        <taxon>Glires</taxon>
        <taxon>Rodentia</taxon>
        <taxon>Myomorpha</taxon>
        <taxon>Muroidea</taxon>
        <taxon>Muridae</taxon>
        <taxon>Murinae</taxon>
        <taxon>Mus</taxon>
        <taxon>Mus</taxon>
    </lineage>
</organism>
<evidence type="ECO:0000250" key="1"/>
<evidence type="ECO:0000250" key="2">
    <source>
        <dbReference type="UniProtKB" id="P62341"/>
    </source>
</evidence>
<evidence type="ECO:0000250" key="3">
    <source>
        <dbReference type="UniProtKB" id="Q1H5H1"/>
    </source>
</evidence>
<evidence type="ECO:0000255" key="4"/>
<evidence type="ECO:0000269" key="5">
    <source>
    </source>
</evidence>
<evidence type="ECO:0000269" key="6">
    <source>
    </source>
</evidence>
<evidence type="ECO:0000269" key="7">
    <source>
    </source>
</evidence>
<evidence type="ECO:0000305" key="8"/>
<evidence type="ECO:0000312" key="9">
    <source>
        <dbReference type="MGI" id="MGI:1916477"/>
    </source>
</evidence>
<proteinExistence type="evidence at protein level"/>
<feature type="signal peptide" evidence="4">
    <location>
        <begin position="1"/>
        <end position="19"/>
    </location>
</feature>
<feature type="chain" id="PRO_0000032291" description="Thioredoxin reductase-like selenoprotein T">
    <location>
        <begin position="20"/>
        <end position="195"/>
    </location>
</feature>
<feature type="transmembrane region" description="Helical" evidence="4">
    <location>
        <begin position="85"/>
        <end position="103"/>
    </location>
</feature>
<feature type="non-standard amino acid" description="Selenocysteine" evidence="1">
    <location>
        <position position="49"/>
    </location>
</feature>
<feature type="cross-link" description="Cysteinyl-selenocysteine (Cys-Sec)" evidence="4">
    <location>
        <begin position="46"/>
        <end position="49"/>
    </location>
</feature>
<reference key="1">
    <citation type="journal article" date="2005" name="Science">
        <title>The transcriptional landscape of the mammalian genome.</title>
        <authorList>
            <person name="Carninci P."/>
            <person name="Kasukawa T."/>
            <person name="Katayama S."/>
            <person name="Gough J."/>
            <person name="Frith M.C."/>
            <person name="Maeda N."/>
            <person name="Oyama R."/>
            <person name="Ravasi T."/>
            <person name="Lenhard B."/>
            <person name="Wells C."/>
            <person name="Kodzius R."/>
            <person name="Shimokawa K."/>
            <person name="Bajic V.B."/>
            <person name="Brenner S.E."/>
            <person name="Batalov S."/>
            <person name="Forrest A.R."/>
            <person name="Zavolan M."/>
            <person name="Davis M.J."/>
            <person name="Wilming L.G."/>
            <person name="Aidinis V."/>
            <person name="Allen J.E."/>
            <person name="Ambesi-Impiombato A."/>
            <person name="Apweiler R."/>
            <person name="Aturaliya R.N."/>
            <person name="Bailey T.L."/>
            <person name="Bansal M."/>
            <person name="Baxter L."/>
            <person name="Beisel K.W."/>
            <person name="Bersano T."/>
            <person name="Bono H."/>
            <person name="Chalk A.M."/>
            <person name="Chiu K.P."/>
            <person name="Choudhary V."/>
            <person name="Christoffels A."/>
            <person name="Clutterbuck D.R."/>
            <person name="Crowe M.L."/>
            <person name="Dalla E."/>
            <person name="Dalrymple B.P."/>
            <person name="de Bono B."/>
            <person name="Della Gatta G."/>
            <person name="di Bernardo D."/>
            <person name="Down T."/>
            <person name="Engstrom P."/>
            <person name="Fagiolini M."/>
            <person name="Faulkner G."/>
            <person name="Fletcher C.F."/>
            <person name="Fukushima T."/>
            <person name="Furuno M."/>
            <person name="Futaki S."/>
            <person name="Gariboldi M."/>
            <person name="Georgii-Hemming P."/>
            <person name="Gingeras T.R."/>
            <person name="Gojobori T."/>
            <person name="Green R.E."/>
            <person name="Gustincich S."/>
            <person name="Harbers M."/>
            <person name="Hayashi Y."/>
            <person name="Hensch T.K."/>
            <person name="Hirokawa N."/>
            <person name="Hill D."/>
            <person name="Huminiecki L."/>
            <person name="Iacono M."/>
            <person name="Ikeo K."/>
            <person name="Iwama A."/>
            <person name="Ishikawa T."/>
            <person name="Jakt M."/>
            <person name="Kanapin A."/>
            <person name="Katoh M."/>
            <person name="Kawasawa Y."/>
            <person name="Kelso J."/>
            <person name="Kitamura H."/>
            <person name="Kitano H."/>
            <person name="Kollias G."/>
            <person name="Krishnan S.P."/>
            <person name="Kruger A."/>
            <person name="Kummerfeld S.K."/>
            <person name="Kurochkin I.V."/>
            <person name="Lareau L.F."/>
            <person name="Lazarevic D."/>
            <person name="Lipovich L."/>
            <person name="Liu J."/>
            <person name="Liuni S."/>
            <person name="McWilliam S."/>
            <person name="Madan Babu M."/>
            <person name="Madera M."/>
            <person name="Marchionni L."/>
            <person name="Matsuda H."/>
            <person name="Matsuzawa S."/>
            <person name="Miki H."/>
            <person name="Mignone F."/>
            <person name="Miyake S."/>
            <person name="Morris K."/>
            <person name="Mottagui-Tabar S."/>
            <person name="Mulder N."/>
            <person name="Nakano N."/>
            <person name="Nakauchi H."/>
            <person name="Ng P."/>
            <person name="Nilsson R."/>
            <person name="Nishiguchi S."/>
            <person name="Nishikawa S."/>
            <person name="Nori F."/>
            <person name="Ohara O."/>
            <person name="Okazaki Y."/>
            <person name="Orlando V."/>
            <person name="Pang K.C."/>
            <person name="Pavan W.J."/>
            <person name="Pavesi G."/>
            <person name="Pesole G."/>
            <person name="Petrovsky N."/>
            <person name="Piazza S."/>
            <person name="Reed J."/>
            <person name="Reid J.F."/>
            <person name="Ring B.Z."/>
            <person name="Ringwald M."/>
            <person name="Rost B."/>
            <person name="Ruan Y."/>
            <person name="Salzberg S.L."/>
            <person name="Sandelin A."/>
            <person name="Schneider C."/>
            <person name="Schoenbach C."/>
            <person name="Sekiguchi K."/>
            <person name="Semple C.A."/>
            <person name="Seno S."/>
            <person name="Sessa L."/>
            <person name="Sheng Y."/>
            <person name="Shibata Y."/>
            <person name="Shimada H."/>
            <person name="Shimada K."/>
            <person name="Silva D."/>
            <person name="Sinclair B."/>
            <person name="Sperling S."/>
            <person name="Stupka E."/>
            <person name="Sugiura K."/>
            <person name="Sultana R."/>
            <person name="Takenaka Y."/>
            <person name="Taki K."/>
            <person name="Tammoja K."/>
            <person name="Tan S.L."/>
            <person name="Tang S."/>
            <person name="Taylor M.S."/>
            <person name="Tegner J."/>
            <person name="Teichmann S.A."/>
            <person name="Ueda H.R."/>
            <person name="van Nimwegen E."/>
            <person name="Verardo R."/>
            <person name="Wei C.L."/>
            <person name="Yagi K."/>
            <person name="Yamanishi H."/>
            <person name="Zabarovsky E."/>
            <person name="Zhu S."/>
            <person name="Zimmer A."/>
            <person name="Hide W."/>
            <person name="Bult C."/>
            <person name="Grimmond S.M."/>
            <person name="Teasdale R.D."/>
            <person name="Liu E.T."/>
            <person name="Brusic V."/>
            <person name="Quackenbush J."/>
            <person name="Wahlestedt C."/>
            <person name="Mattick J.S."/>
            <person name="Hume D.A."/>
            <person name="Kai C."/>
            <person name="Sasaki D."/>
            <person name="Tomaru Y."/>
            <person name="Fukuda S."/>
            <person name="Kanamori-Katayama M."/>
            <person name="Suzuki M."/>
            <person name="Aoki J."/>
            <person name="Arakawa T."/>
            <person name="Iida J."/>
            <person name="Imamura K."/>
            <person name="Itoh M."/>
            <person name="Kato T."/>
            <person name="Kawaji H."/>
            <person name="Kawagashira N."/>
            <person name="Kawashima T."/>
            <person name="Kojima M."/>
            <person name="Kondo S."/>
            <person name="Konno H."/>
            <person name="Nakano K."/>
            <person name="Ninomiya N."/>
            <person name="Nishio T."/>
            <person name="Okada M."/>
            <person name="Plessy C."/>
            <person name="Shibata K."/>
            <person name="Shiraki T."/>
            <person name="Suzuki S."/>
            <person name="Tagami M."/>
            <person name="Waki K."/>
            <person name="Watahiki A."/>
            <person name="Okamura-Oho Y."/>
            <person name="Suzuki H."/>
            <person name="Kawai J."/>
            <person name="Hayashizaki Y."/>
        </authorList>
    </citation>
    <scope>NUCLEOTIDE SEQUENCE [LARGE SCALE MRNA]</scope>
    <source>
        <strain>C57BL/6J</strain>
        <tissue>Embryo</tissue>
        <tissue>Head</tissue>
    </source>
</reference>
<reference key="2">
    <citation type="journal article" date="2004" name="Genome Res.">
        <title>The status, quality, and expansion of the NIH full-length cDNA project: the Mammalian Gene Collection (MGC).</title>
        <authorList>
            <consortium name="The MGC Project Team"/>
        </authorList>
    </citation>
    <scope>NUCLEOTIDE SEQUENCE [LARGE SCALE MRNA]</scope>
    <source>
        <tissue>Brain</tissue>
        <tissue>Mammary gland</tissue>
    </source>
</reference>
<reference key="3">
    <citation type="journal article" date="2009" name="Biochem. Cell Biol.">
        <title>Selenoprotein T deficiency alters cell adhesion and elevates selenoprotein W expression in murine fibroblast cells.</title>
        <authorList>
            <person name="Sengupta A."/>
            <person name="Carlson B.A."/>
            <person name="Labunskyy V.M."/>
            <person name="Gladyshev V.N."/>
            <person name="Hatfield D.L."/>
        </authorList>
    </citation>
    <scope>FUNCTION</scope>
</reference>
<reference key="4">
    <citation type="journal article" date="2010" name="Cell">
        <title>A tissue-specific atlas of mouse protein phosphorylation and expression.</title>
        <authorList>
            <person name="Huttlin E.L."/>
            <person name="Jedrychowski M.P."/>
            <person name="Elias J.E."/>
            <person name="Goswami T."/>
            <person name="Rad R."/>
            <person name="Beausoleil S.A."/>
            <person name="Villen J."/>
            <person name="Haas W."/>
            <person name="Sowa M.E."/>
            <person name="Gygi S.P."/>
        </authorList>
    </citation>
    <scope>IDENTIFICATION BY MASS SPECTROMETRY [LARGE SCALE ANALYSIS]</scope>
    <source>
        <tissue>Brain</tissue>
        <tissue>Brown adipose tissue</tissue>
        <tissue>Heart</tissue>
        <tissue>Kidney</tissue>
        <tissue>Liver</tissue>
        <tissue>Lung</tissue>
        <tissue>Pancreas</tissue>
        <tissue>Spleen</tissue>
        <tissue>Testis</tissue>
    </source>
</reference>
<reference key="5">
    <citation type="journal article" date="2013" name="Endocrinology">
        <title>The PACAP-regulated gene selenoprotein T is abundantly expressed in mouse and human beta-cells and its targeted inactivation impairs glucose tolerance.</title>
        <authorList>
            <person name="Prevost G."/>
            <person name="Arabo A."/>
            <person name="Jian L."/>
            <person name="Quelennec E."/>
            <person name="Cartier D."/>
            <person name="Hassan S."/>
            <person name="Falluel-Morel A."/>
            <person name="Tanguy Y."/>
            <person name="Gargani S."/>
            <person name="Lihrmann I."/>
            <person name="Kerr-Conte J."/>
            <person name="Lefebvre H."/>
            <person name="Pattou F."/>
            <person name="Anouar Y."/>
        </authorList>
    </citation>
    <scope>FUNCTION</scope>
    <scope>DISRUPTION PHENOTYPE</scope>
    <scope>SUBCELLULAR LOCATION</scope>
    <scope>TISSUE SPECIFICITY</scope>
    <scope>INDUCTION BY ADCYAP1</scope>
</reference>
<reference key="6">
    <citation type="journal article" date="2016" name="Antioxid. Redox Signal.">
        <title>Selenoprotein T exerts an essential oxidoreductase activity that protects dopaminergic neurons in mouse models of Parkinson's Disease.</title>
        <authorList>
            <person name="Boukhzar L."/>
            <person name="Hamieh A."/>
            <person name="Cartier D."/>
            <person name="Tanguy Y."/>
            <person name="Alsharif I."/>
            <person name="Castex M."/>
            <person name="Arabo A."/>
            <person name="El Hajji S."/>
            <person name="Bonnet J.J."/>
            <person name="Errami M."/>
            <person name="Falluel-Morel A."/>
            <person name="Chagraoui A."/>
            <person name="Lihrmann I."/>
            <person name="Anouar Y."/>
        </authorList>
    </citation>
    <scope>FUNCTION</scope>
    <scope>INDUCTION BY NEUROTOXINS</scope>
    <scope>DISRUPTION PHENOTYPE</scope>
    <scope>TISSUE SPECIFICITY</scope>
</reference>
<accession>P62342</accession>
<accession>A2RTC6</accession>
<accession>O95904</accession>
<accession>Q8CHV4</accession>
<accession>Q9CZ45</accession>
<accession>Q9NZJ3</accession>
<gene>
    <name evidence="9" type="primary">Selenot</name>
    <name evidence="9" type="synonym">Selt</name>
</gene>
<comment type="function">
    <text evidence="3 5 6 7">Selenoprotein with thioredoxin reductase-like oxidoreductase activity (By similarity). Protects dopaminergic neurons against oxidative stress and cell death (PubMed:26866473). Involved in ADCYAP1/PACAP-induced calcium mobilization and neuroendocrine secretion (By similarity). Plays a role in fibroblast anchorage and redox regulation (PubMed:19935881). In gastric smooth muscle, modulates the contraction processes through the regulation of calcium release and MYLK activation (By similarity). In pancreatic islets, involved in the control of glucose homeostasis, contributes to prolonged ADCYAP1/PACAP-induced insulin secretion (PubMed:23913443).</text>
</comment>
<comment type="catalytic activity">
    <reaction evidence="3">
        <text>[thioredoxin]-dithiol + NADP(+) = [thioredoxin]-disulfide + NADPH + H(+)</text>
        <dbReference type="Rhea" id="RHEA:20345"/>
        <dbReference type="Rhea" id="RHEA-COMP:10698"/>
        <dbReference type="Rhea" id="RHEA-COMP:10700"/>
        <dbReference type="ChEBI" id="CHEBI:15378"/>
        <dbReference type="ChEBI" id="CHEBI:29950"/>
        <dbReference type="ChEBI" id="CHEBI:50058"/>
        <dbReference type="ChEBI" id="CHEBI:57783"/>
        <dbReference type="ChEBI" id="CHEBI:58349"/>
        <dbReference type="EC" id="1.8.1.9"/>
    </reaction>
</comment>
<comment type="subcellular location">
    <subcellularLocation>
        <location evidence="6">Endoplasmic reticulum membrane</location>
        <topology evidence="4">Single-pass membrane protein</topology>
    </subcellularLocation>
</comment>
<comment type="tissue specificity">
    <text evidence="6 7">Ubiquitous. Highly expressed in the endocrine pancreas (PubMed:23913443). Expressed at low levels in the adult brain (PubMed:26866473).</text>
</comment>
<comment type="induction">
    <text evidence="6 7">Rapidly induced by ADCYAP1/PACAP neuropeptide (PubMed:23913443). In striatum neurons and astrocytes, induced by Parkinson disease-inducing neurotoxins such as 1-methyl-4-phenyl-1,2,3,6-tetrahydropyridine (MPTP) or rotenone (PubMed:26866473).</text>
</comment>
<comment type="PTM">
    <text evidence="1">May contain a selenide-sulfide bond between Cys-46 and Sec-49. This bond is speculated to serve as redox-active pair (By similarity).</text>
</comment>
<comment type="disruption phenotype">
    <text evidence="6 7">Knockout embryos die before E8 (PubMed:26866473). Male conditional pancreatic beta-cell knockout mice display impaired glucose tolerance with an increased number of smaller islets compared to wild-type littermates (PubMed:23913443). Brain conditional knockout mice treated with Parkinson disease-inducing neurotoxins such as 1-methyl-4-phenyl-1,2,3,6-tetrahydropyridine (MPTP) rapidly show tremor and absence of movement to die within 2h after treatment (PubMed:26866473).</text>
</comment>
<comment type="similarity">
    <text evidence="8">Belongs to the SelWTH family. Selenoprotein T subfamily.</text>
</comment>
<comment type="sequence caution" evidence="8">
    <conflict type="erroneous initiation">
        <sequence resource="EMBL-CDS" id="AAH19970"/>
    </conflict>
    <text>Truncated N-terminus.</text>
</comment>
<comment type="sequence caution" evidence="8">
    <conflict type="erroneous initiation">
        <sequence resource="EMBL-CDS" id="AAH38867"/>
    </conflict>
    <text>Truncated N-terminus.</text>
</comment>
<comment type="sequence caution" evidence="8">
    <conflict type="erroneous initiation">
        <sequence resource="EMBL-CDS" id="BAC55254"/>
    </conflict>
    <text>Truncated N-terminus.</text>
</comment>
<comment type="sequence caution" evidence="8">
    <conflict type="erroneous initiation">
        <sequence resource="EMBL-CDS" id="BAC55259"/>
    </conflict>
    <text>Truncated N-terminus.</text>
</comment>
<comment type="sequence caution" evidence="8">
    <conflict type="erroneous initiation">
        <sequence resource="EMBL-CDS" id="BAC55261"/>
    </conflict>
    <text>Truncated N-terminus.</text>
</comment>
<keyword id="KW-0256">Endoplasmic reticulum</keyword>
<keyword id="KW-0472">Membrane</keyword>
<keyword id="KW-0521">NADP</keyword>
<keyword id="KW-0560">Oxidoreductase</keyword>
<keyword id="KW-0676">Redox-active center</keyword>
<keyword id="KW-1185">Reference proteome</keyword>
<keyword id="KW-0712">Selenocysteine</keyword>
<keyword id="KW-0732">Signal</keyword>
<keyword id="KW-0812">Transmembrane</keyword>
<keyword id="KW-1133">Transmembrane helix</keyword>
<protein>
    <recommendedName>
        <fullName evidence="8">Thioredoxin reductase-like selenoprotein T</fullName>
        <shortName evidence="2">SelT</shortName>
        <ecNumber evidence="3">1.8.1.9</ecNumber>
    </recommendedName>
</protein>
<name>SELT_MOUSE</name>
<dbReference type="EC" id="1.8.1.9" evidence="3"/>
<dbReference type="EMBL" id="AK013022">
    <property type="protein sequence ID" value="BAC55254.1"/>
    <property type="status" value="ALT_INIT"/>
    <property type="molecule type" value="mRNA"/>
</dbReference>
<dbReference type="EMBL" id="AK032838">
    <property type="protein sequence ID" value="BAC55259.1"/>
    <property type="status" value="ALT_INIT"/>
    <property type="molecule type" value="mRNA"/>
</dbReference>
<dbReference type="EMBL" id="AK047958">
    <property type="protein sequence ID" value="BAC55261.1"/>
    <property type="status" value="ALT_INIT"/>
    <property type="molecule type" value="mRNA"/>
</dbReference>
<dbReference type="EMBL" id="BC019970">
    <property type="protein sequence ID" value="AAH19970.1"/>
    <property type="status" value="ALT_INIT"/>
    <property type="molecule type" value="mRNA"/>
</dbReference>
<dbReference type="EMBL" id="BC038867">
    <property type="protein sequence ID" value="AAH38867.2"/>
    <property type="status" value="ALT_INIT"/>
    <property type="molecule type" value="mRNA"/>
</dbReference>
<dbReference type="EMBL" id="BC132453">
    <property type="protein sequence ID" value="AAI32454.2"/>
    <property type="molecule type" value="mRNA"/>
</dbReference>
<dbReference type="EMBL" id="BC138424">
    <property type="protein sequence ID" value="AAI38425.1"/>
    <property type="molecule type" value="mRNA"/>
</dbReference>
<dbReference type="CCDS" id="CCDS38437.1"/>
<dbReference type="RefSeq" id="NP_001035486.2">
    <property type="nucleotide sequence ID" value="NM_001040396.3"/>
</dbReference>
<dbReference type="BioGRID" id="213304">
    <property type="interactions" value="2"/>
</dbReference>
<dbReference type="FunCoup" id="P62342">
    <property type="interactions" value="1779"/>
</dbReference>
<dbReference type="STRING" id="10090.ENSMUSP00000103557"/>
<dbReference type="iPTMnet" id="P62342"/>
<dbReference type="PhosphoSitePlus" id="P62342"/>
<dbReference type="SwissPalm" id="P62342"/>
<dbReference type="jPOST" id="P62342"/>
<dbReference type="PaxDb" id="10090-ENSMUSP00000103557"/>
<dbReference type="PeptideAtlas" id="P62342"/>
<dbReference type="ProteomicsDB" id="257119"/>
<dbReference type="Pumba" id="P62342"/>
<dbReference type="Antibodypedia" id="48150">
    <property type="antibodies" value="63 antibodies from 15 providers"/>
</dbReference>
<dbReference type="Ensembl" id="ENSMUST00000107924.3">
    <property type="protein sequence ID" value="ENSMUSP00000103557.3"/>
    <property type="gene ID" value="ENSMUSG00000075700.11"/>
</dbReference>
<dbReference type="GeneID" id="69227"/>
<dbReference type="KEGG" id="mmu:69227"/>
<dbReference type="UCSC" id="uc008phx.2">
    <property type="organism name" value="mouse"/>
</dbReference>
<dbReference type="AGR" id="MGI:1916477"/>
<dbReference type="CTD" id="51714"/>
<dbReference type="MGI" id="MGI:1916477">
    <property type="gene designation" value="Selenot"/>
</dbReference>
<dbReference type="VEuPathDB" id="HostDB:ENSMUSG00000075700"/>
<dbReference type="eggNOG" id="KOG3286">
    <property type="taxonomic scope" value="Eukaryota"/>
</dbReference>
<dbReference type="GeneTree" id="ENSGT00390000011725"/>
<dbReference type="HOGENOM" id="CLU_113870_1_0_1"/>
<dbReference type="InParanoid" id="P62342"/>
<dbReference type="OMA" id="LKFQICC"/>
<dbReference type="OrthoDB" id="60822at2759"/>
<dbReference type="PhylomeDB" id="P62342"/>
<dbReference type="TreeFam" id="TF321235"/>
<dbReference type="BioGRID-ORCS" id="69227">
    <property type="hits" value="0 hits in 78 CRISPR screens"/>
</dbReference>
<dbReference type="ChiTaRS" id="Selt">
    <property type="organism name" value="mouse"/>
</dbReference>
<dbReference type="PRO" id="PR:P62342"/>
<dbReference type="Proteomes" id="UP000000589">
    <property type="component" value="Chromosome 3"/>
</dbReference>
<dbReference type="RNAct" id="P62342">
    <property type="molecule type" value="protein"/>
</dbReference>
<dbReference type="Bgee" id="ENSMUSG00000075700">
    <property type="expression patterns" value="Expressed in olfactory epithelium and 258 other cell types or tissues"/>
</dbReference>
<dbReference type="GO" id="GO:0005783">
    <property type="term" value="C:endoplasmic reticulum"/>
    <property type="evidence" value="ECO:0000314"/>
    <property type="project" value="MGI"/>
</dbReference>
<dbReference type="GO" id="GO:0005789">
    <property type="term" value="C:endoplasmic reticulum membrane"/>
    <property type="evidence" value="ECO:0000250"/>
    <property type="project" value="UniProtKB"/>
</dbReference>
<dbReference type="GO" id="GO:0004791">
    <property type="term" value="F:thioredoxin-disulfide reductase (NADPH) activity"/>
    <property type="evidence" value="ECO:0000250"/>
    <property type="project" value="UniProtKB"/>
</dbReference>
<dbReference type="GO" id="GO:0045454">
    <property type="term" value="P:cell redox homeostasis"/>
    <property type="evidence" value="ECO:0000315"/>
    <property type="project" value="UniProtKB"/>
</dbReference>
<dbReference type="GO" id="GO:0098869">
    <property type="term" value="P:cellular oxidant detoxification"/>
    <property type="evidence" value="ECO:0000250"/>
    <property type="project" value="UniProtKB"/>
</dbReference>
<dbReference type="GO" id="GO:0042593">
    <property type="term" value="P:glucose homeostasis"/>
    <property type="evidence" value="ECO:0000315"/>
    <property type="project" value="MGI"/>
</dbReference>
<dbReference type="GO" id="GO:0035773">
    <property type="term" value="P:insulin secretion involved in cellular response to glucose stimulus"/>
    <property type="evidence" value="ECO:0000315"/>
    <property type="project" value="MGI"/>
</dbReference>
<dbReference type="GO" id="GO:0031016">
    <property type="term" value="P:pancreas development"/>
    <property type="evidence" value="ECO:0000315"/>
    <property type="project" value="MGI"/>
</dbReference>
<dbReference type="GO" id="GO:0007204">
    <property type="term" value="P:positive regulation of cytosolic calcium ion concentration"/>
    <property type="evidence" value="ECO:0000250"/>
    <property type="project" value="UniProtKB"/>
</dbReference>
<dbReference type="GO" id="GO:0060124">
    <property type="term" value="P:positive regulation of growth hormone secretion"/>
    <property type="evidence" value="ECO:0000250"/>
    <property type="project" value="UniProtKB"/>
</dbReference>
<dbReference type="GO" id="GO:0009749">
    <property type="term" value="P:response to glucose"/>
    <property type="evidence" value="ECO:0000315"/>
    <property type="project" value="MGI"/>
</dbReference>
<dbReference type="FunFam" id="3.40.30.10:FF:000085">
    <property type="entry name" value="Selenoprotein T"/>
    <property type="match status" value="1"/>
</dbReference>
<dbReference type="Gene3D" id="3.40.30.10">
    <property type="entry name" value="Glutaredoxin"/>
    <property type="match status" value="1"/>
</dbReference>
<dbReference type="InterPro" id="IPR011893">
    <property type="entry name" value="Selenoprotein_Rdx-typ"/>
</dbReference>
<dbReference type="InterPro" id="IPR019389">
    <property type="entry name" value="Selenoprotein_T"/>
</dbReference>
<dbReference type="InterPro" id="IPR036249">
    <property type="entry name" value="Thioredoxin-like_sf"/>
</dbReference>
<dbReference type="NCBIfam" id="TIGR02174">
    <property type="entry name" value="CXXU_selWTH"/>
    <property type="match status" value="1"/>
</dbReference>
<dbReference type="PANTHER" id="PTHR13544">
    <property type="entry name" value="SELENOPROTEIN T"/>
    <property type="match status" value="1"/>
</dbReference>
<dbReference type="PANTHER" id="PTHR13544:SF0">
    <property type="entry name" value="THIOREDOXIN REDUCTASE-LIKE SELENOPROTEIN T"/>
    <property type="match status" value="1"/>
</dbReference>
<dbReference type="Pfam" id="PF10262">
    <property type="entry name" value="Rdx"/>
    <property type="match status" value="1"/>
</dbReference>
<dbReference type="SUPFAM" id="SSF52833">
    <property type="entry name" value="Thioredoxin-like"/>
    <property type="match status" value="1"/>
</dbReference>
<sequence>MRLLLLLLVAASAVVRSEASANLGGVPSKRLKMQYATGPLLKFQICVSUGYRRVFEEYMRVISQRYPDIRIEGENYLPQPIYRHIASFLSVFKLVLIGLIIVGKDPFAFFGMQAPSIWQWGQENKVYACMMVFFLSNMIENQCMSTGAFEITLNDVPVWSKLESGHLPSMQQLVQILDNEMKLNVHMDSIPHHRS</sequence>